<gene>
    <name evidence="1" type="primary">pheS</name>
    <name type="ordered locus">lpl2639</name>
</gene>
<name>SYFA_LEGPL</name>
<evidence type="ECO:0000255" key="1">
    <source>
        <dbReference type="HAMAP-Rule" id="MF_00281"/>
    </source>
</evidence>
<sequence>MLVLINTIQEQASEAIKQATDIVALEQIRVDFLGKKGKLTELLKGLANLSAEEKPKVGQLVNQAKQGISALIETKMIELKEKQLLAKLAAEQIDVTLPGRNHSTGSLHPVTQVKHRINDYFSRLGFDIVEGPEIETEFYNFEALNIPGHHPARAMHDTFYFGDGRLLRTHTSPVQIRTMEQRKPPFRLIAPGRVYRCDSDVTHTPMFHQVEGLLIDKQATLAGLKGLLQDFFSYFFGRELALRFRPSYFPFTEPSAEVDIECTQCNGKGCRSCKFTGWLEVLGCGMVHPNVLIAVNIDPNEYHGWAFGMGMDRLAMLYYGIDDLRMLFENDLTFLRQF</sequence>
<feature type="chain" id="PRO_0000231989" description="Phenylalanine--tRNA ligase alpha subunit">
    <location>
        <begin position="1"/>
        <end position="338"/>
    </location>
</feature>
<feature type="binding site" evidence="1">
    <location>
        <position position="253"/>
    </location>
    <ligand>
        <name>Mg(2+)</name>
        <dbReference type="ChEBI" id="CHEBI:18420"/>
        <note>shared with beta subunit</note>
    </ligand>
</feature>
<comment type="catalytic activity">
    <reaction evidence="1">
        <text>tRNA(Phe) + L-phenylalanine + ATP = L-phenylalanyl-tRNA(Phe) + AMP + diphosphate + H(+)</text>
        <dbReference type="Rhea" id="RHEA:19413"/>
        <dbReference type="Rhea" id="RHEA-COMP:9668"/>
        <dbReference type="Rhea" id="RHEA-COMP:9699"/>
        <dbReference type="ChEBI" id="CHEBI:15378"/>
        <dbReference type="ChEBI" id="CHEBI:30616"/>
        <dbReference type="ChEBI" id="CHEBI:33019"/>
        <dbReference type="ChEBI" id="CHEBI:58095"/>
        <dbReference type="ChEBI" id="CHEBI:78442"/>
        <dbReference type="ChEBI" id="CHEBI:78531"/>
        <dbReference type="ChEBI" id="CHEBI:456215"/>
        <dbReference type="EC" id="6.1.1.20"/>
    </reaction>
</comment>
<comment type="cofactor">
    <cofactor evidence="1">
        <name>Mg(2+)</name>
        <dbReference type="ChEBI" id="CHEBI:18420"/>
    </cofactor>
    <text evidence="1">Binds 2 magnesium ions per tetramer.</text>
</comment>
<comment type="subunit">
    <text evidence="1">Tetramer of two alpha and two beta subunits.</text>
</comment>
<comment type="subcellular location">
    <subcellularLocation>
        <location evidence="1">Cytoplasm</location>
    </subcellularLocation>
</comment>
<comment type="similarity">
    <text evidence="1">Belongs to the class-II aminoacyl-tRNA synthetase family. Phe-tRNA synthetase alpha subunit type 1 subfamily.</text>
</comment>
<reference key="1">
    <citation type="journal article" date="2004" name="Nat. Genet.">
        <title>Evidence in the Legionella pneumophila genome for exploitation of host cell functions and high genome plasticity.</title>
        <authorList>
            <person name="Cazalet C."/>
            <person name="Rusniok C."/>
            <person name="Brueggemann H."/>
            <person name="Zidane N."/>
            <person name="Magnier A."/>
            <person name="Ma L."/>
            <person name="Tichit M."/>
            <person name="Jarraud S."/>
            <person name="Bouchier C."/>
            <person name="Vandenesch F."/>
            <person name="Kunst F."/>
            <person name="Etienne J."/>
            <person name="Glaser P."/>
            <person name="Buchrieser C."/>
        </authorList>
    </citation>
    <scope>NUCLEOTIDE SEQUENCE [LARGE SCALE GENOMIC DNA]</scope>
    <source>
        <strain>Lens</strain>
    </source>
</reference>
<accession>Q5WT86</accession>
<protein>
    <recommendedName>
        <fullName evidence="1">Phenylalanine--tRNA ligase alpha subunit</fullName>
        <ecNumber evidence="1">6.1.1.20</ecNumber>
    </recommendedName>
    <alternativeName>
        <fullName evidence="1">Phenylalanyl-tRNA synthetase alpha subunit</fullName>
        <shortName evidence="1">PheRS</shortName>
    </alternativeName>
</protein>
<keyword id="KW-0030">Aminoacyl-tRNA synthetase</keyword>
<keyword id="KW-0067">ATP-binding</keyword>
<keyword id="KW-0963">Cytoplasm</keyword>
<keyword id="KW-0436">Ligase</keyword>
<keyword id="KW-0460">Magnesium</keyword>
<keyword id="KW-0479">Metal-binding</keyword>
<keyword id="KW-0547">Nucleotide-binding</keyword>
<keyword id="KW-0648">Protein biosynthesis</keyword>
<organism>
    <name type="scientific">Legionella pneumophila (strain Lens)</name>
    <dbReference type="NCBI Taxonomy" id="297245"/>
    <lineage>
        <taxon>Bacteria</taxon>
        <taxon>Pseudomonadati</taxon>
        <taxon>Pseudomonadota</taxon>
        <taxon>Gammaproteobacteria</taxon>
        <taxon>Legionellales</taxon>
        <taxon>Legionellaceae</taxon>
        <taxon>Legionella</taxon>
    </lineage>
</organism>
<proteinExistence type="inferred from homology"/>
<dbReference type="EC" id="6.1.1.20" evidence="1"/>
<dbReference type="EMBL" id="CR628337">
    <property type="protein sequence ID" value="CAH16880.1"/>
    <property type="molecule type" value="Genomic_DNA"/>
</dbReference>
<dbReference type="SMR" id="Q5WT86"/>
<dbReference type="KEGG" id="lpf:lpl2639"/>
<dbReference type="LegioList" id="lpl2639"/>
<dbReference type="HOGENOM" id="CLU_025086_0_1_6"/>
<dbReference type="Proteomes" id="UP000002517">
    <property type="component" value="Chromosome"/>
</dbReference>
<dbReference type="GO" id="GO:0005737">
    <property type="term" value="C:cytoplasm"/>
    <property type="evidence" value="ECO:0007669"/>
    <property type="project" value="UniProtKB-SubCell"/>
</dbReference>
<dbReference type="GO" id="GO:0005524">
    <property type="term" value="F:ATP binding"/>
    <property type="evidence" value="ECO:0007669"/>
    <property type="project" value="UniProtKB-UniRule"/>
</dbReference>
<dbReference type="GO" id="GO:0000287">
    <property type="term" value="F:magnesium ion binding"/>
    <property type="evidence" value="ECO:0007669"/>
    <property type="project" value="UniProtKB-UniRule"/>
</dbReference>
<dbReference type="GO" id="GO:0004826">
    <property type="term" value="F:phenylalanine-tRNA ligase activity"/>
    <property type="evidence" value="ECO:0007669"/>
    <property type="project" value="UniProtKB-UniRule"/>
</dbReference>
<dbReference type="GO" id="GO:0000049">
    <property type="term" value="F:tRNA binding"/>
    <property type="evidence" value="ECO:0007669"/>
    <property type="project" value="InterPro"/>
</dbReference>
<dbReference type="GO" id="GO:0006432">
    <property type="term" value="P:phenylalanyl-tRNA aminoacylation"/>
    <property type="evidence" value="ECO:0007669"/>
    <property type="project" value="UniProtKB-UniRule"/>
</dbReference>
<dbReference type="CDD" id="cd00496">
    <property type="entry name" value="PheRS_alpha_core"/>
    <property type="match status" value="1"/>
</dbReference>
<dbReference type="FunFam" id="3.30.930.10:FF:000003">
    <property type="entry name" value="Phenylalanine--tRNA ligase alpha subunit"/>
    <property type="match status" value="1"/>
</dbReference>
<dbReference type="Gene3D" id="3.30.930.10">
    <property type="entry name" value="Bira Bifunctional Protein, Domain 2"/>
    <property type="match status" value="1"/>
</dbReference>
<dbReference type="HAMAP" id="MF_00281">
    <property type="entry name" value="Phe_tRNA_synth_alpha1"/>
    <property type="match status" value="1"/>
</dbReference>
<dbReference type="InterPro" id="IPR006195">
    <property type="entry name" value="aa-tRNA-synth_II"/>
</dbReference>
<dbReference type="InterPro" id="IPR045864">
    <property type="entry name" value="aa-tRNA-synth_II/BPL/LPL"/>
</dbReference>
<dbReference type="InterPro" id="IPR004529">
    <property type="entry name" value="Phe-tRNA-synth_IIc_asu"/>
</dbReference>
<dbReference type="InterPro" id="IPR004188">
    <property type="entry name" value="Phe-tRNA_ligase_II_N"/>
</dbReference>
<dbReference type="InterPro" id="IPR022911">
    <property type="entry name" value="Phe_tRNA_ligase_alpha1_bac"/>
</dbReference>
<dbReference type="InterPro" id="IPR002319">
    <property type="entry name" value="Phenylalanyl-tRNA_Synthase"/>
</dbReference>
<dbReference type="InterPro" id="IPR010978">
    <property type="entry name" value="tRNA-bd_arm"/>
</dbReference>
<dbReference type="NCBIfam" id="TIGR00468">
    <property type="entry name" value="pheS"/>
    <property type="match status" value="1"/>
</dbReference>
<dbReference type="PANTHER" id="PTHR11538:SF41">
    <property type="entry name" value="PHENYLALANINE--TRNA LIGASE, MITOCHONDRIAL"/>
    <property type="match status" value="1"/>
</dbReference>
<dbReference type="PANTHER" id="PTHR11538">
    <property type="entry name" value="PHENYLALANYL-TRNA SYNTHETASE"/>
    <property type="match status" value="1"/>
</dbReference>
<dbReference type="Pfam" id="PF02912">
    <property type="entry name" value="Phe_tRNA-synt_N"/>
    <property type="match status" value="1"/>
</dbReference>
<dbReference type="Pfam" id="PF01409">
    <property type="entry name" value="tRNA-synt_2d"/>
    <property type="match status" value="1"/>
</dbReference>
<dbReference type="SUPFAM" id="SSF55681">
    <property type="entry name" value="Class II aaRS and biotin synthetases"/>
    <property type="match status" value="1"/>
</dbReference>
<dbReference type="SUPFAM" id="SSF46589">
    <property type="entry name" value="tRNA-binding arm"/>
    <property type="match status" value="1"/>
</dbReference>
<dbReference type="PROSITE" id="PS50862">
    <property type="entry name" value="AA_TRNA_LIGASE_II"/>
    <property type="match status" value="1"/>
</dbReference>